<evidence type="ECO:0000255" key="1">
    <source>
        <dbReference type="HAMAP-Rule" id="MF_00049"/>
    </source>
</evidence>
<accession>A5G068</accession>
<comment type="catalytic activity">
    <reaction evidence="1">
        <text>tRNA(Leu) + L-leucine + ATP = L-leucyl-tRNA(Leu) + AMP + diphosphate</text>
        <dbReference type="Rhea" id="RHEA:11688"/>
        <dbReference type="Rhea" id="RHEA-COMP:9613"/>
        <dbReference type="Rhea" id="RHEA-COMP:9622"/>
        <dbReference type="ChEBI" id="CHEBI:30616"/>
        <dbReference type="ChEBI" id="CHEBI:33019"/>
        <dbReference type="ChEBI" id="CHEBI:57427"/>
        <dbReference type="ChEBI" id="CHEBI:78442"/>
        <dbReference type="ChEBI" id="CHEBI:78494"/>
        <dbReference type="ChEBI" id="CHEBI:456215"/>
        <dbReference type="EC" id="6.1.1.4"/>
    </reaction>
</comment>
<comment type="subcellular location">
    <subcellularLocation>
        <location evidence="1">Cytoplasm</location>
    </subcellularLocation>
</comment>
<comment type="similarity">
    <text evidence="1">Belongs to the class-I aminoacyl-tRNA synthetase family.</text>
</comment>
<protein>
    <recommendedName>
        <fullName evidence="1">Leucine--tRNA ligase</fullName>
        <ecNumber evidence="1">6.1.1.4</ecNumber>
    </recommendedName>
    <alternativeName>
        <fullName evidence="1">Leucyl-tRNA synthetase</fullName>
        <shortName evidence="1">LeuRS</shortName>
    </alternativeName>
</protein>
<name>SYL_ACICJ</name>
<reference key="1">
    <citation type="submission" date="2007-05" db="EMBL/GenBank/DDBJ databases">
        <title>Complete sequence of chromosome of Acidiphilium cryptum JF-5.</title>
        <authorList>
            <consortium name="US DOE Joint Genome Institute"/>
            <person name="Copeland A."/>
            <person name="Lucas S."/>
            <person name="Lapidus A."/>
            <person name="Barry K."/>
            <person name="Detter J.C."/>
            <person name="Glavina del Rio T."/>
            <person name="Hammon N."/>
            <person name="Israni S."/>
            <person name="Dalin E."/>
            <person name="Tice H."/>
            <person name="Pitluck S."/>
            <person name="Sims D."/>
            <person name="Brettin T."/>
            <person name="Bruce D."/>
            <person name="Han C."/>
            <person name="Schmutz J."/>
            <person name="Larimer F."/>
            <person name="Land M."/>
            <person name="Hauser L."/>
            <person name="Kyrpides N."/>
            <person name="Kim E."/>
            <person name="Magnuson T."/>
            <person name="Richardson P."/>
        </authorList>
    </citation>
    <scope>NUCLEOTIDE SEQUENCE [LARGE SCALE GENOMIC DNA]</scope>
    <source>
        <strain>JF-5</strain>
    </source>
</reference>
<organism>
    <name type="scientific">Acidiphilium cryptum (strain JF-5)</name>
    <dbReference type="NCBI Taxonomy" id="349163"/>
    <lineage>
        <taxon>Bacteria</taxon>
        <taxon>Pseudomonadati</taxon>
        <taxon>Pseudomonadota</taxon>
        <taxon>Alphaproteobacteria</taxon>
        <taxon>Acetobacterales</taxon>
        <taxon>Acidocellaceae</taxon>
        <taxon>Acidiphilium</taxon>
    </lineage>
</organism>
<proteinExistence type="inferred from homology"/>
<gene>
    <name evidence="1" type="primary">leuS</name>
    <name type="ordered locus">Acry_2050</name>
</gene>
<feature type="chain" id="PRO_0000334723" description="Leucine--tRNA ligase">
    <location>
        <begin position="1"/>
        <end position="864"/>
    </location>
</feature>
<feature type="short sequence motif" description="'HIGH' region">
    <location>
        <begin position="50"/>
        <end position="60"/>
    </location>
</feature>
<feature type="short sequence motif" description="'KMSKS' region">
    <location>
        <begin position="622"/>
        <end position="626"/>
    </location>
</feature>
<feature type="binding site" evidence="1">
    <location>
        <position position="625"/>
    </location>
    <ligand>
        <name>ATP</name>
        <dbReference type="ChEBI" id="CHEBI:30616"/>
    </ligand>
</feature>
<keyword id="KW-0030">Aminoacyl-tRNA synthetase</keyword>
<keyword id="KW-0067">ATP-binding</keyword>
<keyword id="KW-0963">Cytoplasm</keyword>
<keyword id="KW-0436">Ligase</keyword>
<keyword id="KW-0547">Nucleotide-binding</keyword>
<keyword id="KW-0648">Protein biosynthesis</keyword>
<keyword id="KW-1185">Reference proteome</keyword>
<dbReference type="EC" id="6.1.1.4" evidence="1"/>
<dbReference type="EMBL" id="CP000697">
    <property type="protein sequence ID" value="ABQ31250.1"/>
    <property type="molecule type" value="Genomic_DNA"/>
</dbReference>
<dbReference type="RefSeq" id="WP_012039777.1">
    <property type="nucleotide sequence ID" value="NC_009484.1"/>
</dbReference>
<dbReference type="SMR" id="A5G068"/>
<dbReference type="STRING" id="349163.Acry_2050"/>
<dbReference type="KEGG" id="acr:Acry_2050"/>
<dbReference type="eggNOG" id="COG0495">
    <property type="taxonomic scope" value="Bacteria"/>
</dbReference>
<dbReference type="HOGENOM" id="CLU_004427_0_0_5"/>
<dbReference type="Proteomes" id="UP000000245">
    <property type="component" value="Chromosome"/>
</dbReference>
<dbReference type="GO" id="GO:0005829">
    <property type="term" value="C:cytosol"/>
    <property type="evidence" value="ECO:0007669"/>
    <property type="project" value="TreeGrafter"/>
</dbReference>
<dbReference type="GO" id="GO:0002161">
    <property type="term" value="F:aminoacyl-tRNA deacylase activity"/>
    <property type="evidence" value="ECO:0007669"/>
    <property type="project" value="InterPro"/>
</dbReference>
<dbReference type="GO" id="GO:0005524">
    <property type="term" value="F:ATP binding"/>
    <property type="evidence" value="ECO:0007669"/>
    <property type="project" value="UniProtKB-UniRule"/>
</dbReference>
<dbReference type="GO" id="GO:0004823">
    <property type="term" value="F:leucine-tRNA ligase activity"/>
    <property type="evidence" value="ECO:0007669"/>
    <property type="project" value="UniProtKB-UniRule"/>
</dbReference>
<dbReference type="GO" id="GO:0006429">
    <property type="term" value="P:leucyl-tRNA aminoacylation"/>
    <property type="evidence" value="ECO:0007669"/>
    <property type="project" value="UniProtKB-UniRule"/>
</dbReference>
<dbReference type="CDD" id="cd07958">
    <property type="entry name" value="Anticodon_Ia_Leu_BEm"/>
    <property type="match status" value="1"/>
</dbReference>
<dbReference type="CDD" id="cd00812">
    <property type="entry name" value="LeuRS_core"/>
    <property type="match status" value="1"/>
</dbReference>
<dbReference type="FunFam" id="1.10.730.10:FF:000002">
    <property type="entry name" value="Leucine--tRNA ligase"/>
    <property type="match status" value="1"/>
</dbReference>
<dbReference type="Gene3D" id="2.20.28.290">
    <property type="match status" value="1"/>
</dbReference>
<dbReference type="Gene3D" id="3.10.20.590">
    <property type="match status" value="1"/>
</dbReference>
<dbReference type="Gene3D" id="3.40.50.620">
    <property type="entry name" value="HUPs"/>
    <property type="match status" value="2"/>
</dbReference>
<dbReference type="Gene3D" id="1.10.730.10">
    <property type="entry name" value="Isoleucyl-tRNA Synthetase, Domain 1"/>
    <property type="match status" value="2"/>
</dbReference>
<dbReference type="Gene3D" id="3.90.740.10">
    <property type="entry name" value="Valyl/Leucyl/Isoleucyl-tRNA synthetase, editing domain"/>
    <property type="match status" value="1"/>
</dbReference>
<dbReference type="HAMAP" id="MF_00049_B">
    <property type="entry name" value="Leu_tRNA_synth_B"/>
    <property type="match status" value="1"/>
</dbReference>
<dbReference type="InterPro" id="IPR001412">
    <property type="entry name" value="aa-tRNA-synth_I_CS"/>
</dbReference>
<dbReference type="InterPro" id="IPR002300">
    <property type="entry name" value="aa-tRNA-synth_Ia"/>
</dbReference>
<dbReference type="InterPro" id="IPR002302">
    <property type="entry name" value="Leu-tRNA-ligase"/>
</dbReference>
<dbReference type="InterPro" id="IPR025709">
    <property type="entry name" value="Leu_tRNA-synth_edit"/>
</dbReference>
<dbReference type="InterPro" id="IPR013155">
    <property type="entry name" value="M/V/L/I-tRNA-synth_anticd-bd"/>
</dbReference>
<dbReference type="InterPro" id="IPR015413">
    <property type="entry name" value="Methionyl/Leucyl_tRNA_Synth"/>
</dbReference>
<dbReference type="InterPro" id="IPR014729">
    <property type="entry name" value="Rossmann-like_a/b/a_fold"/>
</dbReference>
<dbReference type="InterPro" id="IPR009080">
    <property type="entry name" value="tRNAsynth_Ia_anticodon-bd"/>
</dbReference>
<dbReference type="InterPro" id="IPR009008">
    <property type="entry name" value="Val/Leu/Ile-tRNA-synth_edit"/>
</dbReference>
<dbReference type="NCBIfam" id="TIGR00396">
    <property type="entry name" value="leuS_bact"/>
    <property type="match status" value="1"/>
</dbReference>
<dbReference type="PANTHER" id="PTHR43740:SF2">
    <property type="entry name" value="LEUCINE--TRNA LIGASE, MITOCHONDRIAL"/>
    <property type="match status" value="1"/>
</dbReference>
<dbReference type="PANTHER" id="PTHR43740">
    <property type="entry name" value="LEUCYL-TRNA SYNTHETASE"/>
    <property type="match status" value="1"/>
</dbReference>
<dbReference type="Pfam" id="PF08264">
    <property type="entry name" value="Anticodon_1"/>
    <property type="match status" value="1"/>
</dbReference>
<dbReference type="Pfam" id="PF00133">
    <property type="entry name" value="tRNA-synt_1"/>
    <property type="match status" value="2"/>
</dbReference>
<dbReference type="Pfam" id="PF13603">
    <property type="entry name" value="tRNA-synt_1_2"/>
    <property type="match status" value="1"/>
</dbReference>
<dbReference type="Pfam" id="PF09334">
    <property type="entry name" value="tRNA-synt_1g"/>
    <property type="match status" value="1"/>
</dbReference>
<dbReference type="PRINTS" id="PR00985">
    <property type="entry name" value="TRNASYNTHLEU"/>
</dbReference>
<dbReference type="SUPFAM" id="SSF47323">
    <property type="entry name" value="Anticodon-binding domain of a subclass of class I aminoacyl-tRNA synthetases"/>
    <property type="match status" value="1"/>
</dbReference>
<dbReference type="SUPFAM" id="SSF52374">
    <property type="entry name" value="Nucleotidylyl transferase"/>
    <property type="match status" value="1"/>
</dbReference>
<dbReference type="SUPFAM" id="SSF50677">
    <property type="entry name" value="ValRS/IleRS/LeuRS editing domain"/>
    <property type="match status" value="1"/>
</dbReference>
<dbReference type="PROSITE" id="PS00178">
    <property type="entry name" value="AA_TRNA_LIGASE_I"/>
    <property type="match status" value="1"/>
</dbReference>
<sequence length="864" mass="95028">MDQTTHDASAYDFTAAEARWQAAWEARNCFATADAPQGGRRKCYVLEMFPYPSGKIHMGHVRNYAIGDVIARARRAQGYDVLHPMGWDAFGLPAENAARERNVDPAKWTRDNIAAMKADLKRVGLSVDWSREFATCDPEYYGHQQKLFLDLWRAGLAYRRESAVNWDPVDMTVLANEQVIDGRGWKSGAPVEKRKLRQWFFRITDFAADLLAGLDTLENWPERVRTMQRNWIGRSEGAEFTIRLAAPCGGIESVPVYSTRPDTLFGMSFVALAPDHPLATAVAAANPEAAAFIAECQSAGTSEAAIEAAEKRGFDTGLRVVHPFDPSRTHPVWIANFVLMDYGTGAIFGCPAHDQRDLDFARKYGLDVTVVVAPKDDPGLAVGDVAFTGDGVIVNSGFLDGLDVAAAKSRAIAELESRGAGKGVVNWRLRDWGVSRQRAWGCPIPMIHCEVCGTVPVPEKDLPVRLPDDLPFDRPGNALDHHPSWKHVACPQCGAAAQRETDTFDTFVDSSWYFARFCAPHAPVPADPAATSHWMPVDHYIGGIEHAILHLLYARFFTRAMHRLGQVGVAEPFAGLFTQGMLTHESYRTEDGKWLYPEEVIRHADHATTLDGRKVIVGPIEKMSKSKRNTVDPSAVIARFGADTARWFVLSDNPPERDVEWTEAGAQGAFRYVQRLYRLARSVAADRADDVALERAEGEARKLRQATHRTIAAVTEAIDGFAFNVAIARLYELANAIAETEGRDAPGLPAARREAMSALIRLAAPIIPHVAEEANAQVSPEAGLVVNQPWPVAEPELLKRDSVTLAVQIMGKLRGTIELPPGADAETAIAAAMAEPRIAQLLEGATIVKRIHVPDRIVNFVVRP</sequence>